<proteinExistence type="inferred from homology"/>
<gene>
    <name evidence="1" type="primary">rlmE</name>
    <name evidence="1" type="synonym">rrmJ</name>
    <name type="ordered locus">Mhun_1487</name>
</gene>
<reference key="1">
    <citation type="journal article" date="2016" name="Stand. Genomic Sci.">
        <title>Complete genome sequence of Methanospirillum hungatei type strain JF1.</title>
        <authorList>
            <person name="Gunsalus R.P."/>
            <person name="Cook L.E."/>
            <person name="Crable B."/>
            <person name="Rohlin L."/>
            <person name="McDonald E."/>
            <person name="Mouttaki H."/>
            <person name="Sieber J.R."/>
            <person name="Poweleit N."/>
            <person name="Zhou H."/>
            <person name="Lapidus A.L."/>
            <person name="Daligault H.E."/>
            <person name="Land M."/>
            <person name="Gilna P."/>
            <person name="Ivanova N."/>
            <person name="Kyrpides N."/>
            <person name="Culley D.E."/>
            <person name="McInerney M.J."/>
        </authorList>
    </citation>
    <scope>NUCLEOTIDE SEQUENCE [LARGE SCALE GENOMIC DNA]</scope>
    <source>
        <strain>ATCC 27890 / DSM 864 / NBRC 100397 / JF-1</strain>
    </source>
</reference>
<sequence length="207" mass="22977">MGSQWGKDKAYLKAKQSGYRSRAAMKLKEIIQKNPVIRPDDNILDLGAAPGSWLQVLREMTNGVIVGVDLNPILPIEGVRTIIGDFSDPVVIAQIRELMPEVNGIVCDASPKLSGQRSFDQARAIELNEMALGVARQLLKQGGNMIMKSFQGEDFSWLYNRVKQEFYSVRTYKAHTTRKGSTEMYIIAKNFIGTHQGLEESVSDGSA</sequence>
<name>RLME_METHJ</name>
<keyword id="KW-0963">Cytoplasm</keyword>
<keyword id="KW-0489">Methyltransferase</keyword>
<keyword id="KW-1185">Reference proteome</keyword>
<keyword id="KW-0698">rRNA processing</keyword>
<keyword id="KW-0949">S-adenosyl-L-methionine</keyword>
<keyword id="KW-0808">Transferase</keyword>
<protein>
    <recommendedName>
        <fullName evidence="1">Ribosomal RNA large subunit methyltransferase E</fullName>
        <ecNumber evidence="1">2.1.1.166</ecNumber>
    </recommendedName>
    <alternativeName>
        <fullName evidence="1">23S rRNA Um2552 methyltransferase</fullName>
    </alternativeName>
    <alternativeName>
        <fullName evidence="1">rRNA (uridine-2'-O-)-methyltransferase</fullName>
    </alternativeName>
</protein>
<feature type="chain" id="PRO_0000282822" description="Ribosomal RNA large subunit methyltransferase E">
    <location>
        <begin position="1"/>
        <end position="207"/>
    </location>
</feature>
<feature type="active site" description="Proton acceptor" evidence="1">
    <location>
        <position position="148"/>
    </location>
</feature>
<feature type="binding site" evidence="1">
    <location>
        <position position="51"/>
    </location>
    <ligand>
        <name>S-adenosyl-L-methionine</name>
        <dbReference type="ChEBI" id="CHEBI:59789"/>
    </ligand>
</feature>
<feature type="binding site" evidence="1">
    <location>
        <position position="53"/>
    </location>
    <ligand>
        <name>S-adenosyl-L-methionine</name>
        <dbReference type="ChEBI" id="CHEBI:59789"/>
    </ligand>
</feature>
<feature type="binding site" evidence="1">
    <location>
        <position position="69"/>
    </location>
    <ligand>
        <name>S-adenosyl-L-methionine</name>
        <dbReference type="ChEBI" id="CHEBI:59789"/>
    </ligand>
</feature>
<feature type="binding site" evidence="1">
    <location>
        <position position="85"/>
    </location>
    <ligand>
        <name>S-adenosyl-L-methionine</name>
        <dbReference type="ChEBI" id="CHEBI:59789"/>
    </ligand>
</feature>
<feature type="binding site" evidence="1">
    <location>
        <position position="108"/>
    </location>
    <ligand>
        <name>S-adenosyl-L-methionine</name>
        <dbReference type="ChEBI" id="CHEBI:59789"/>
    </ligand>
</feature>
<comment type="function">
    <text evidence="1">Specifically methylates the uridine in position 2552 of 23S rRNA at the 2'-O position of the ribose in the fully assembled 50S ribosomal subunit.</text>
</comment>
<comment type="catalytic activity">
    <reaction evidence="1">
        <text>uridine(2552) in 23S rRNA + S-adenosyl-L-methionine = 2'-O-methyluridine(2552) in 23S rRNA + S-adenosyl-L-homocysteine + H(+)</text>
        <dbReference type="Rhea" id="RHEA:42720"/>
        <dbReference type="Rhea" id="RHEA-COMP:10202"/>
        <dbReference type="Rhea" id="RHEA-COMP:10203"/>
        <dbReference type="ChEBI" id="CHEBI:15378"/>
        <dbReference type="ChEBI" id="CHEBI:57856"/>
        <dbReference type="ChEBI" id="CHEBI:59789"/>
        <dbReference type="ChEBI" id="CHEBI:65315"/>
        <dbReference type="ChEBI" id="CHEBI:74478"/>
        <dbReference type="EC" id="2.1.1.166"/>
    </reaction>
</comment>
<comment type="subcellular location">
    <subcellularLocation>
        <location evidence="1">Cytoplasm</location>
    </subcellularLocation>
</comment>
<comment type="similarity">
    <text evidence="1">Belongs to the class I-like SAM-binding methyltransferase superfamily. RNA methyltransferase RlmE family.</text>
</comment>
<accession>Q2FNX6</accession>
<dbReference type="EC" id="2.1.1.166" evidence="1"/>
<dbReference type="EMBL" id="CP000254">
    <property type="protein sequence ID" value="ABD41221.1"/>
    <property type="molecule type" value="Genomic_DNA"/>
</dbReference>
<dbReference type="RefSeq" id="WP_011448490.1">
    <property type="nucleotide sequence ID" value="NC_007796.1"/>
</dbReference>
<dbReference type="SMR" id="Q2FNX6"/>
<dbReference type="FunCoup" id="Q2FNX6">
    <property type="interactions" value="163"/>
</dbReference>
<dbReference type="STRING" id="323259.Mhun_1487"/>
<dbReference type="EnsemblBacteria" id="ABD41221">
    <property type="protein sequence ID" value="ABD41221"/>
    <property type="gene ID" value="Mhun_1487"/>
</dbReference>
<dbReference type="GeneID" id="3922718"/>
<dbReference type="KEGG" id="mhu:Mhun_1487"/>
<dbReference type="eggNOG" id="arCOG00079">
    <property type="taxonomic scope" value="Archaea"/>
</dbReference>
<dbReference type="HOGENOM" id="CLU_009422_4_1_2"/>
<dbReference type="InParanoid" id="Q2FNX6"/>
<dbReference type="OrthoDB" id="26307at2157"/>
<dbReference type="Proteomes" id="UP000001941">
    <property type="component" value="Chromosome"/>
</dbReference>
<dbReference type="GO" id="GO:0005737">
    <property type="term" value="C:cytoplasm"/>
    <property type="evidence" value="ECO:0007669"/>
    <property type="project" value="UniProtKB-SubCell"/>
</dbReference>
<dbReference type="GO" id="GO:0008650">
    <property type="term" value="F:rRNA (uridine-2'-O-)-methyltransferase activity"/>
    <property type="evidence" value="ECO:0007669"/>
    <property type="project" value="UniProtKB-UniRule"/>
</dbReference>
<dbReference type="Gene3D" id="3.40.50.150">
    <property type="entry name" value="Vaccinia Virus protein VP39"/>
    <property type="match status" value="1"/>
</dbReference>
<dbReference type="HAMAP" id="MF_01547">
    <property type="entry name" value="RNA_methyltr_E"/>
    <property type="match status" value="1"/>
</dbReference>
<dbReference type="InterPro" id="IPR050082">
    <property type="entry name" value="RNA_methyltr_RlmE"/>
</dbReference>
<dbReference type="InterPro" id="IPR002877">
    <property type="entry name" value="RNA_MeTrfase_FtsJ_dom"/>
</dbReference>
<dbReference type="InterPro" id="IPR015507">
    <property type="entry name" value="rRNA-MeTfrase_E"/>
</dbReference>
<dbReference type="InterPro" id="IPR029063">
    <property type="entry name" value="SAM-dependent_MTases_sf"/>
</dbReference>
<dbReference type="PANTHER" id="PTHR10920:SF13">
    <property type="entry name" value="PRE-RRNA 2'-O-RIBOSE RNA METHYLTRANSFERASE FTSJ3"/>
    <property type="match status" value="1"/>
</dbReference>
<dbReference type="PANTHER" id="PTHR10920">
    <property type="entry name" value="RIBOSOMAL RNA METHYLTRANSFERASE"/>
    <property type="match status" value="1"/>
</dbReference>
<dbReference type="Pfam" id="PF01728">
    <property type="entry name" value="FtsJ"/>
    <property type="match status" value="1"/>
</dbReference>
<dbReference type="PIRSF" id="PIRSF005461">
    <property type="entry name" value="23S_rRNA_mtase"/>
    <property type="match status" value="1"/>
</dbReference>
<dbReference type="SUPFAM" id="SSF53335">
    <property type="entry name" value="S-adenosyl-L-methionine-dependent methyltransferases"/>
    <property type="match status" value="1"/>
</dbReference>
<organism>
    <name type="scientific">Methanospirillum hungatei JF-1 (strain ATCC 27890 / DSM 864 / NBRC 100397 / JF-1)</name>
    <dbReference type="NCBI Taxonomy" id="323259"/>
    <lineage>
        <taxon>Archaea</taxon>
        <taxon>Methanobacteriati</taxon>
        <taxon>Methanobacteriota</taxon>
        <taxon>Stenosarchaea group</taxon>
        <taxon>Methanomicrobia</taxon>
        <taxon>Methanomicrobiales</taxon>
        <taxon>Methanospirillaceae</taxon>
        <taxon>Methanospirillum</taxon>
    </lineage>
</organism>
<evidence type="ECO:0000255" key="1">
    <source>
        <dbReference type="HAMAP-Rule" id="MF_01547"/>
    </source>
</evidence>